<organism>
    <name type="scientific">Paraburkholderia phymatum (strain DSM 17167 / CIP 108236 / LMG 21445 / STM815)</name>
    <name type="common">Burkholderia phymatum</name>
    <dbReference type="NCBI Taxonomy" id="391038"/>
    <lineage>
        <taxon>Bacteria</taxon>
        <taxon>Pseudomonadati</taxon>
        <taxon>Pseudomonadota</taxon>
        <taxon>Betaproteobacteria</taxon>
        <taxon>Burkholderiales</taxon>
        <taxon>Burkholderiaceae</taxon>
        <taxon>Paraburkholderia</taxon>
    </lineage>
</organism>
<evidence type="ECO:0000255" key="1">
    <source>
        <dbReference type="HAMAP-Rule" id="MF_00199"/>
    </source>
</evidence>
<reference key="1">
    <citation type="journal article" date="2014" name="Stand. Genomic Sci.">
        <title>Complete genome sequence of Burkholderia phymatum STM815(T), a broad host range and efficient nitrogen-fixing symbiont of Mimosa species.</title>
        <authorList>
            <person name="Moulin L."/>
            <person name="Klonowska A."/>
            <person name="Caroline B."/>
            <person name="Booth K."/>
            <person name="Vriezen J.A."/>
            <person name="Melkonian R."/>
            <person name="James E.K."/>
            <person name="Young J.P."/>
            <person name="Bena G."/>
            <person name="Hauser L."/>
            <person name="Land M."/>
            <person name="Kyrpides N."/>
            <person name="Bruce D."/>
            <person name="Chain P."/>
            <person name="Copeland A."/>
            <person name="Pitluck S."/>
            <person name="Woyke T."/>
            <person name="Lizotte-Waniewski M."/>
            <person name="Bristow J."/>
            <person name="Riley M."/>
        </authorList>
    </citation>
    <scope>NUCLEOTIDE SEQUENCE [LARGE SCALE GENOMIC DNA]</scope>
    <source>
        <strain>DSM 17167 / CIP 108236 / LMG 21445 / STM815</strain>
    </source>
</reference>
<protein>
    <recommendedName>
        <fullName evidence="1">Bis(5'-nucleosyl)-tetraphosphatase, symmetrical</fullName>
        <ecNumber evidence="1">3.6.1.41</ecNumber>
    </recommendedName>
    <alternativeName>
        <fullName evidence="1">Ap4A hydrolase</fullName>
    </alternativeName>
    <alternativeName>
        <fullName evidence="1">Diadenosine 5',5'''-P1,P4-tetraphosphate pyrophosphohydrolase</fullName>
    </alternativeName>
    <alternativeName>
        <fullName evidence="1">Diadenosine tetraphosphatase</fullName>
    </alternativeName>
</protein>
<name>APAH_PARP8</name>
<dbReference type="EC" id="3.6.1.41" evidence="1"/>
<dbReference type="EMBL" id="CP001043">
    <property type="protein sequence ID" value="ACC71496.1"/>
    <property type="molecule type" value="Genomic_DNA"/>
</dbReference>
<dbReference type="RefSeq" id="WP_012401702.1">
    <property type="nucleotide sequence ID" value="NC_010622.1"/>
</dbReference>
<dbReference type="SMR" id="B2JFC8"/>
<dbReference type="STRING" id="391038.Bphy_2321"/>
<dbReference type="KEGG" id="bph:Bphy_2321"/>
<dbReference type="eggNOG" id="COG0639">
    <property type="taxonomic scope" value="Bacteria"/>
</dbReference>
<dbReference type="HOGENOM" id="CLU_056184_1_0_4"/>
<dbReference type="OrthoDB" id="9807890at2"/>
<dbReference type="Proteomes" id="UP000001192">
    <property type="component" value="Chromosome 1"/>
</dbReference>
<dbReference type="GO" id="GO:0008803">
    <property type="term" value="F:bis(5'-nucleosyl)-tetraphosphatase (symmetrical) activity"/>
    <property type="evidence" value="ECO:0007669"/>
    <property type="project" value="UniProtKB-UniRule"/>
</dbReference>
<dbReference type="CDD" id="cd07422">
    <property type="entry name" value="MPP_ApaH"/>
    <property type="match status" value="1"/>
</dbReference>
<dbReference type="Gene3D" id="3.60.21.10">
    <property type="match status" value="1"/>
</dbReference>
<dbReference type="HAMAP" id="MF_00199">
    <property type="entry name" value="ApaH"/>
    <property type="match status" value="1"/>
</dbReference>
<dbReference type="InterPro" id="IPR004617">
    <property type="entry name" value="ApaH"/>
</dbReference>
<dbReference type="InterPro" id="IPR004843">
    <property type="entry name" value="Calcineurin-like_PHP_ApaH"/>
</dbReference>
<dbReference type="InterPro" id="IPR029052">
    <property type="entry name" value="Metallo-depent_PP-like"/>
</dbReference>
<dbReference type="NCBIfam" id="TIGR00668">
    <property type="entry name" value="apaH"/>
    <property type="match status" value="1"/>
</dbReference>
<dbReference type="NCBIfam" id="NF001204">
    <property type="entry name" value="PRK00166.1"/>
    <property type="match status" value="1"/>
</dbReference>
<dbReference type="PANTHER" id="PTHR40942">
    <property type="match status" value="1"/>
</dbReference>
<dbReference type="PANTHER" id="PTHR40942:SF4">
    <property type="entry name" value="CYTOCHROME C5"/>
    <property type="match status" value="1"/>
</dbReference>
<dbReference type="Pfam" id="PF00149">
    <property type="entry name" value="Metallophos"/>
    <property type="match status" value="1"/>
</dbReference>
<dbReference type="PIRSF" id="PIRSF000903">
    <property type="entry name" value="B5n-ttraPtase_sm"/>
    <property type="match status" value="1"/>
</dbReference>
<dbReference type="SUPFAM" id="SSF56300">
    <property type="entry name" value="Metallo-dependent phosphatases"/>
    <property type="match status" value="1"/>
</dbReference>
<keyword id="KW-0378">Hydrolase</keyword>
<keyword id="KW-1185">Reference proteome</keyword>
<gene>
    <name evidence="1" type="primary">apaH</name>
    <name type="ordered locus">Bphy_2321</name>
</gene>
<accession>B2JFC8</accession>
<comment type="function">
    <text evidence="1">Hydrolyzes diadenosine 5',5'''-P1,P4-tetraphosphate to yield ADP.</text>
</comment>
<comment type="catalytic activity">
    <reaction evidence="1">
        <text>P(1),P(4)-bis(5'-adenosyl) tetraphosphate + H2O = 2 ADP + 2 H(+)</text>
        <dbReference type="Rhea" id="RHEA:24252"/>
        <dbReference type="ChEBI" id="CHEBI:15377"/>
        <dbReference type="ChEBI" id="CHEBI:15378"/>
        <dbReference type="ChEBI" id="CHEBI:58141"/>
        <dbReference type="ChEBI" id="CHEBI:456216"/>
        <dbReference type="EC" id="3.6.1.41"/>
    </reaction>
</comment>
<comment type="similarity">
    <text evidence="1">Belongs to the Ap4A hydrolase family.</text>
</comment>
<feature type="chain" id="PRO_1000099317" description="Bis(5'-nucleosyl)-tetraphosphatase, symmetrical">
    <location>
        <begin position="1"/>
        <end position="282"/>
    </location>
</feature>
<sequence length="282" mass="30538">MTASTASAPLAFGDLQGCRTQFQQLLAKAAPPADAPLWFAGDLINRGGESLAMLRDIIALGDRAVPVLGNHDLHLLSVSAGIRKSKKGDTIDEILAAPDADDMLHWIRHRPLAHYENGMLLVHAGVLPQWDVDLTLELADELQRALRAPGWKETLAGLYGNEPNRWKPGLKGIDRLRLTCTALTRMRFCNADGVMDFSSSGGIGSAPAGFMPWFDVPGRKTEEITVVFGHWAALGLLIRDNLIGLDSGCVWGEQLSAVRLAQSAAERTVTQVECEGCRADVH</sequence>
<proteinExistence type="inferred from homology"/>